<comment type="function">
    <text evidence="1">Murein endopeptidase that cleaves the D-alanyl-meso-2,6-diamino-pimelyl amide bond that connects peptidoglycan strands. Likely plays a role in the removal of murein from the sacculus.</text>
</comment>
<comment type="cofactor">
    <cofactor evidence="1">
        <name>Zn(2+)</name>
        <dbReference type="ChEBI" id="CHEBI:29105"/>
    </cofactor>
    <text evidence="1">Binds 2 Zn(2+) ions per subunit. Zn(2+) ion 1 is bound in the active site. Zn(2+) ion 2 is bound at the dimer interface by residues from both subunits.</text>
</comment>
<comment type="subunit">
    <text evidence="1">Dimer.</text>
</comment>
<comment type="subcellular location">
    <subcellularLocation>
        <location evidence="1">Periplasm</location>
    </subcellularLocation>
</comment>
<comment type="similarity">
    <text evidence="1">Belongs to the peptidase M74 family.</text>
</comment>
<protein>
    <recommendedName>
        <fullName evidence="1">Penicillin-insensitive murein endopeptidase</fullName>
        <ecNumber evidence="1">3.4.24.-</ecNumber>
    </recommendedName>
    <alternativeName>
        <fullName evidence="1">D-alanyl-D-alanine-endopeptidase</fullName>
        <shortName evidence="1">DD-endopeptidase</shortName>
    </alternativeName>
</protein>
<gene>
    <name evidence="1" type="primary">mepA</name>
    <name type="ordered locus">KPK_1421</name>
</gene>
<dbReference type="EC" id="3.4.24.-" evidence="1"/>
<dbReference type="EMBL" id="CP000964">
    <property type="protein sequence ID" value="ACI06640.1"/>
    <property type="molecule type" value="Genomic_DNA"/>
</dbReference>
<dbReference type="SMR" id="B5XVW7"/>
<dbReference type="MEROPS" id="M74.001"/>
<dbReference type="KEGG" id="kpe:KPK_1421"/>
<dbReference type="HOGENOM" id="CLU_052496_0_0_6"/>
<dbReference type="Proteomes" id="UP000001734">
    <property type="component" value="Chromosome"/>
</dbReference>
<dbReference type="GO" id="GO:0030288">
    <property type="term" value="C:outer membrane-bounded periplasmic space"/>
    <property type="evidence" value="ECO:0007669"/>
    <property type="project" value="InterPro"/>
</dbReference>
<dbReference type="GO" id="GO:0046872">
    <property type="term" value="F:metal ion binding"/>
    <property type="evidence" value="ECO:0007669"/>
    <property type="project" value="UniProtKB-KW"/>
</dbReference>
<dbReference type="GO" id="GO:0004222">
    <property type="term" value="F:metalloendopeptidase activity"/>
    <property type="evidence" value="ECO:0007669"/>
    <property type="project" value="UniProtKB-UniRule"/>
</dbReference>
<dbReference type="GO" id="GO:0004252">
    <property type="term" value="F:serine-type endopeptidase activity"/>
    <property type="evidence" value="ECO:0007669"/>
    <property type="project" value="InterPro"/>
</dbReference>
<dbReference type="GO" id="GO:0000270">
    <property type="term" value="P:peptidoglycan metabolic process"/>
    <property type="evidence" value="ECO:0007669"/>
    <property type="project" value="UniProtKB-UniRule"/>
</dbReference>
<dbReference type="GO" id="GO:0006508">
    <property type="term" value="P:proteolysis"/>
    <property type="evidence" value="ECO:0007669"/>
    <property type="project" value="UniProtKB-KW"/>
</dbReference>
<dbReference type="Gene3D" id="3.30.1380.10">
    <property type="match status" value="1"/>
</dbReference>
<dbReference type="HAMAP" id="MF_01623">
    <property type="entry name" value="MepA"/>
    <property type="match status" value="1"/>
</dbReference>
<dbReference type="InterPro" id="IPR009045">
    <property type="entry name" value="Hedgehog_sig/DD-Pept_Zn-bd_sf"/>
</dbReference>
<dbReference type="InterPro" id="IPR005073">
    <property type="entry name" value="Peptidase_M74"/>
</dbReference>
<dbReference type="NCBIfam" id="NF006947">
    <property type="entry name" value="PRK09429.1"/>
    <property type="match status" value="1"/>
</dbReference>
<dbReference type="Pfam" id="PF03411">
    <property type="entry name" value="Peptidase_M74"/>
    <property type="match status" value="1"/>
</dbReference>
<dbReference type="PIRSF" id="PIRSF018455">
    <property type="entry name" value="MepA"/>
    <property type="match status" value="1"/>
</dbReference>
<dbReference type="SUPFAM" id="SSF55166">
    <property type="entry name" value="Hedgehog/DD-peptidase"/>
    <property type="match status" value="1"/>
</dbReference>
<proteinExistence type="inferred from homology"/>
<evidence type="ECO:0000255" key="1">
    <source>
        <dbReference type="HAMAP-Rule" id="MF_01623"/>
    </source>
</evidence>
<evidence type="ECO:0000256" key="2">
    <source>
        <dbReference type="SAM" id="MobiDB-lite"/>
    </source>
</evidence>
<accession>B5XVW7</accession>
<organism>
    <name type="scientific">Klebsiella pneumoniae (strain 342)</name>
    <dbReference type="NCBI Taxonomy" id="507522"/>
    <lineage>
        <taxon>Bacteria</taxon>
        <taxon>Pseudomonadati</taxon>
        <taxon>Pseudomonadota</taxon>
        <taxon>Gammaproteobacteria</taxon>
        <taxon>Enterobacterales</taxon>
        <taxon>Enterobacteriaceae</taxon>
        <taxon>Klebsiella/Raoultella group</taxon>
        <taxon>Klebsiella</taxon>
        <taxon>Klebsiella pneumoniae complex</taxon>
    </lineage>
</organism>
<feature type="signal peptide" evidence="1">
    <location>
        <begin position="1"/>
        <end position="19"/>
    </location>
</feature>
<feature type="chain" id="PRO_1000186104" description="Penicillin-insensitive murein endopeptidase">
    <location>
        <begin position="20"/>
        <end position="274"/>
    </location>
</feature>
<feature type="region of interest" description="Disordered" evidence="2">
    <location>
        <begin position="224"/>
        <end position="263"/>
    </location>
</feature>
<feature type="compositionally biased region" description="Pro residues" evidence="2">
    <location>
        <begin position="245"/>
        <end position="263"/>
    </location>
</feature>
<feature type="binding site" evidence="1">
    <location>
        <position position="110"/>
    </location>
    <ligand>
        <name>Zn(2+)</name>
        <dbReference type="ChEBI" id="CHEBI:29105"/>
        <label>1</label>
    </ligand>
</feature>
<feature type="binding site" evidence="1">
    <location>
        <position position="113"/>
    </location>
    <ligand>
        <name>Zn(2+)</name>
        <dbReference type="ChEBI" id="CHEBI:29105"/>
        <label>1</label>
    </ligand>
</feature>
<feature type="binding site" evidence="1">
    <location>
        <position position="120"/>
    </location>
    <ligand>
        <name>Zn(2+)</name>
        <dbReference type="ChEBI" id="CHEBI:29105"/>
        <label>1</label>
    </ligand>
</feature>
<feature type="binding site" evidence="1">
    <location>
        <position position="147"/>
    </location>
    <ligand>
        <name>Zn(2+)</name>
        <dbReference type="ChEBI" id="CHEBI:29105"/>
        <label>2</label>
    </ligand>
</feature>
<feature type="binding site" evidence="1">
    <location>
        <position position="150"/>
    </location>
    <ligand>
        <name>Zn(2+)</name>
        <dbReference type="ChEBI" id="CHEBI:29105"/>
        <label>2</label>
    </ligand>
</feature>
<feature type="binding site" evidence="1">
    <location>
        <position position="211"/>
    </location>
    <ligand>
        <name>Zn(2+)</name>
        <dbReference type="ChEBI" id="CHEBI:29105"/>
        <label>1</label>
    </ligand>
</feature>
<feature type="disulfide bond" evidence="1">
    <location>
        <begin position="44"/>
        <end position="265"/>
    </location>
</feature>
<feature type="disulfide bond" evidence="1">
    <location>
        <begin position="187"/>
        <end position="235"/>
    </location>
</feature>
<feature type="disulfide bond" evidence="1">
    <location>
        <begin position="216"/>
        <end position="223"/>
    </location>
</feature>
<keyword id="KW-1015">Disulfide bond</keyword>
<keyword id="KW-0378">Hydrolase</keyword>
<keyword id="KW-0479">Metal-binding</keyword>
<keyword id="KW-0482">Metalloprotease</keyword>
<keyword id="KW-0574">Periplasm</keyword>
<keyword id="KW-0645">Protease</keyword>
<keyword id="KW-0732">Signal</keyword>
<keyword id="KW-0862">Zinc</keyword>
<name>MEPA_KLEP3</name>
<reference key="1">
    <citation type="journal article" date="2008" name="PLoS Genet.">
        <title>Complete genome sequence of the N2-fixing broad host range endophyte Klebsiella pneumoniae 342 and virulence predictions verified in mice.</title>
        <authorList>
            <person name="Fouts D.E."/>
            <person name="Tyler H.L."/>
            <person name="DeBoy R.T."/>
            <person name="Daugherty S."/>
            <person name="Ren Q."/>
            <person name="Badger J.H."/>
            <person name="Durkin A.S."/>
            <person name="Huot H."/>
            <person name="Shrivastava S."/>
            <person name="Kothari S."/>
            <person name="Dodson R.J."/>
            <person name="Mohamoud Y."/>
            <person name="Khouri H."/>
            <person name="Roesch L.F.W."/>
            <person name="Krogfelt K.A."/>
            <person name="Struve C."/>
            <person name="Triplett E.W."/>
            <person name="Methe B.A."/>
        </authorList>
    </citation>
    <scope>NUCLEOTIDE SEQUENCE [LARGE SCALE GENOMIC DNA]</scope>
    <source>
        <strain>342</strain>
    </source>
</reference>
<sequence length="274" mass="29632">MKNTVIALLALLASAGSLAATPWQKISQPIGGSAQSIGAFSNGCIVGAEALPLSATGYQVMRTDQRRYFGHPDLVQFIQRLSNQVHNKGMGTVLIGDMGMPAGGRFNGGHASHQTGLDVDIFLQLPQTRWTSSQLLKPQALDLVASDGKHVVPSLWSPQISQLIKLAAEDSEVTRIFVNPAIKQQLCLDAGSDRQWLRKVRPWFQHRAHMHVRLRCPAGSLECEDQAPPPPGDGCGAELQSWFEPPKPGSTPPVKKTPPPLPPSCQALLDEHVL</sequence>